<reference key="1">
    <citation type="submission" date="2006-12" db="EMBL/GenBank/DDBJ databases">
        <title>Complete sequence of Shewanella sp. W3-18-1.</title>
        <authorList>
            <consortium name="US DOE Joint Genome Institute"/>
            <person name="Copeland A."/>
            <person name="Lucas S."/>
            <person name="Lapidus A."/>
            <person name="Barry K."/>
            <person name="Detter J.C."/>
            <person name="Glavina del Rio T."/>
            <person name="Hammon N."/>
            <person name="Israni S."/>
            <person name="Dalin E."/>
            <person name="Tice H."/>
            <person name="Pitluck S."/>
            <person name="Chain P."/>
            <person name="Malfatti S."/>
            <person name="Shin M."/>
            <person name="Vergez L."/>
            <person name="Schmutz J."/>
            <person name="Larimer F."/>
            <person name="Land M."/>
            <person name="Hauser L."/>
            <person name="Kyrpides N."/>
            <person name="Lykidis A."/>
            <person name="Tiedje J."/>
            <person name="Richardson P."/>
        </authorList>
    </citation>
    <scope>NUCLEOTIDE SEQUENCE [LARGE SCALE GENOMIC DNA]</scope>
    <source>
        <strain>W3-18-1</strain>
    </source>
</reference>
<evidence type="ECO:0000255" key="1">
    <source>
        <dbReference type="HAMAP-Rule" id="MF_00332"/>
    </source>
</evidence>
<evidence type="ECO:0000256" key="2">
    <source>
        <dbReference type="SAM" id="MobiDB-lite"/>
    </source>
</evidence>
<proteinExistence type="inferred from homology"/>
<accession>A1RGN1</accession>
<protein>
    <recommendedName>
        <fullName evidence="1">Chaperone protein DnaK</fullName>
    </recommendedName>
    <alternativeName>
        <fullName evidence="1">HSP70</fullName>
    </alternativeName>
    <alternativeName>
        <fullName evidence="1">Heat shock 70 kDa protein</fullName>
    </alternativeName>
    <alternativeName>
        <fullName evidence="1">Heat shock protein 70</fullName>
    </alternativeName>
</protein>
<dbReference type="EMBL" id="CP000503">
    <property type="protein sequence ID" value="ABM23826.1"/>
    <property type="molecule type" value="Genomic_DNA"/>
</dbReference>
<dbReference type="RefSeq" id="WP_011788352.1">
    <property type="nucleotide sequence ID" value="NC_008750.1"/>
</dbReference>
<dbReference type="SMR" id="A1RGN1"/>
<dbReference type="GeneID" id="67444554"/>
<dbReference type="KEGG" id="shw:Sputw3181_0976"/>
<dbReference type="HOGENOM" id="CLU_005965_2_1_6"/>
<dbReference type="Proteomes" id="UP000002597">
    <property type="component" value="Chromosome"/>
</dbReference>
<dbReference type="GO" id="GO:0005524">
    <property type="term" value="F:ATP binding"/>
    <property type="evidence" value="ECO:0007669"/>
    <property type="project" value="UniProtKB-UniRule"/>
</dbReference>
<dbReference type="GO" id="GO:0140662">
    <property type="term" value="F:ATP-dependent protein folding chaperone"/>
    <property type="evidence" value="ECO:0007669"/>
    <property type="project" value="InterPro"/>
</dbReference>
<dbReference type="GO" id="GO:0051082">
    <property type="term" value="F:unfolded protein binding"/>
    <property type="evidence" value="ECO:0007669"/>
    <property type="project" value="InterPro"/>
</dbReference>
<dbReference type="CDD" id="cd10234">
    <property type="entry name" value="ASKHA_NBD_HSP70_DnaK-like"/>
    <property type="match status" value="1"/>
</dbReference>
<dbReference type="FunFam" id="2.60.34.10:FF:000014">
    <property type="entry name" value="Chaperone protein DnaK HSP70"/>
    <property type="match status" value="1"/>
</dbReference>
<dbReference type="FunFam" id="1.20.1270.10:FF:000001">
    <property type="entry name" value="Molecular chaperone DnaK"/>
    <property type="match status" value="1"/>
</dbReference>
<dbReference type="FunFam" id="3.30.420.40:FF:000004">
    <property type="entry name" value="Molecular chaperone DnaK"/>
    <property type="match status" value="1"/>
</dbReference>
<dbReference type="FunFam" id="3.90.640.10:FF:000003">
    <property type="entry name" value="Molecular chaperone DnaK"/>
    <property type="match status" value="1"/>
</dbReference>
<dbReference type="Gene3D" id="1.20.1270.10">
    <property type="match status" value="1"/>
</dbReference>
<dbReference type="Gene3D" id="3.30.420.40">
    <property type="match status" value="2"/>
</dbReference>
<dbReference type="Gene3D" id="3.90.640.10">
    <property type="entry name" value="Actin, Chain A, domain 4"/>
    <property type="match status" value="1"/>
</dbReference>
<dbReference type="Gene3D" id="2.60.34.10">
    <property type="entry name" value="Substrate Binding Domain Of DNAk, Chain A, domain 1"/>
    <property type="match status" value="1"/>
</dbReference>
<dbReference type="HAMAP" id="MF_00332">
    <property type="entry name" value="DnaK"/>
    <property type="match status" value="1"/>
</dbReference>
<dbReference type="InterPro" id="IPR043129">
    <property type="entry name" value="ATPase_NBD"/>
</dbReference>
<dbReference type="InterPro" id="IPR012725">
    <property type="entry name" value="Chaperone_DnaK"/>
</dbReference>
<dbReference type="InterPro" id="IPR018181">
    <property type="entry name" value="Heat_shock_70_CS"/>
</dbReference>
<dbReference type="InterPro" id="IPR029048">
    <property type="entry name" value="HSP70_C_sf"/>
</dbReference>
<dbReference type="InterPro" id="IPR029047">
    <property type="entry name" value="HSP70_peptide-bd_sf"/>
</dbReference>
<dbReference type="InterPro" id="IPR013126">
    <property type="entry name" value="Hsp_70_fam"/>
</dbReference>
<dbReference type="NCBIfam" id="NF001413">
    <property type="entry name" value="PRK00290.1"/>
    <property type="match status" value="1"/>
</dbReference>
<dbReference type="NCBIfam" id="NF003520">
    <property type="entry name" value="PRK05183.1"/>
    <property type="match status" value="1"/>
</dbReference>
<dbReference type="NCBIfam" id="TIGR02350">
    <property type="entry name" value="prok_dnaK"/>
    <property type="match status" value="1"/>
</dbReference>
<dbReference type="PANTHER" id="PTHR19375">
    <property type="entry name" value="HEAT SHOCK PROTEIN 70KDA"/>
    <property type="match status" value="1"/>
</dbReference>
<dbReference type="Pfam" id="PF00012">
    <property type="entry name" value="HSP70"/>
    <property type="match status" value="1"/>
</dbReference>
<dbReference type="PRINTS" id="PR00301">
    <property type="entry name" value="HEATSHOCK70"/>
</dbReference>
<dbReference type="SUPFAM" id="SSF53067">
    <property type="entry name" value="Actin-like ATPase domain"/>
    <property type="match status" value="2"/>
</dbReference>
<dbReference type="SUPFAM" id="SSF100920">
    <property type="entry name" value="Heat shock protein 70kD (HSP70), peptide-binding domain"/>
    <property type="match status" value="1"/>
</dbReference>
<dbReference type="PROSITE" id="PS00297">
    <property type="entry name" value="HSP70_1"/>
    <property type="match status" value="1"/>
</dbReference>
<dbReference type="PROSITE" id="PS00329">
    <property type="entry name" value="HSP70_2"/>
    <property type="match status" value="1"/>
</dbReference>
<dbReference type="PROSITE" id="PS01036">
    <property type="entry name" value="HSP70_3"/>
    <property type="match status" value="1"/>
</dbReference>
<sequence>MGKIIGIDLGTTNSCVAVLDGGKARVLENAEGDRTTPSIIAYTDDETIVGSPAKRQAVTNPTNTFFAIKRLIGRRFKDDEVQRDVNIMPFKIIQADNGDAWVESRGNKMAPPQVSAEILKKMKKTAEDFLGEEVTEAVITVPAYFNDSQRQATKDAGRIAGLDVKRIINEPTAAALAYGIDKKQGDNIVAVYDLGGGTFDISIIEIDSNDGDQTFEVLATNGDTHLGGEDFDNRLINYLADEFKKEQGLDLRKDPLAMQRLKEAAEKAKIELSSTNHTEVNLPYITADATGPKHLVIKITRAKLESLVEDLILRTLEPLKVALADADLSVSDVNEVILVGGQTRMPKVQEAVTNFFGKEPRKDVNPDEAVAVGAAIQAGVLSGDVKDVLLLDVTPLSLGIETMGSVMTKLIEKNTTIPTKAQQVFSTADDNQSAVTIHVLQGERKQASANKSLGQFNLDGIEPAPRGQPQIEVMFDIDADGILHVSATDKKTGKKQNITIKASSGLSEEEVAQMVRDAEAHADEDKKFEELVQARNQADGLVHATKKQVEEAGDALPSEDKEKIQAAMAAVDTATKGNDKEAIEKASQELIEASAKLMEIAQAKSQAQGGAETNAGKQANAAADDVVDAEFEEVKDDKK</sequence>
<keyword id="KW-0067">ATP-binding</keyword>
<keyword id="KW-0143">Chaperone</keyword>
<keyword id="KW-0547">Nucleotide-binding</keyword>
<keyword id="KW-0597">Phosphoprotein</keyword>
<keyword id="KW-0346">Stress response</keyword>
<gene>
    <name evidence="1" type="primary">dnaK</name>
    <name type="ordered locus">Sputw3181_0976</name>
</gene>
<name>DNAK_SHESW</name>
<feature type="chain" id="PRO_1000059668" description="Chaperone protein DnaK">
    <location>
        <begin position="1"/>
        <end position="639"/>
    </location>
</feature>
<feature type="region of interest" description="Disordered" evidence="2">
    <location>
        <begin position="605"/>
        <end position="624"/>
    </location>
</feature>
<feature type="modified residue" description="Phosphothreonine; by autocatalysis" evidence="1">
    <location>
        <position position="198"/>
    </location>
</feature>
<organism>
    <name type="scientific">Shewanella sp. (strain W3-18-1)</name>
    <dbReference type="NCBI Taxonomy" id="351745"/>
    <lineage>
        <taxon>Bacteria</taxon>
        <taxon>Pseudomonadati</taxon>
        <taxon>Pseudomonadota</taxon>
        <taxon>Gammaproteobacteria</taxon>
        <taxon>Alteromonadales</taxon>
        <taxon>Shewanellaceae</taxon>
        <taxon>Shewanella</taxon>
    </lineage>
</organism>
<comment type="function">
    <text evidence="1">Acts as a chaperone.</text>
</comment>
<comment type="induction">
    <text evidence="1">By stress conditions e.g. heat shock.</text>
</comment>
<comment type="similarity">
    <text evidence="1">Belongs to the heat shock protein 70 family.</text>
</comment>